<organism>
    <name type="scientific">Salmonella typhimurium (strain LT2 / SGSC1412 / ATCC 700720)</name>
    <dbReference type="NCBI Taxonomy" id="99287"/>
    <lineage>
        <taxon>Bacteria</taxon>
        <taxon>Pseudomonadati</taxon>
        <taxon>Pseudomonadota</taxon>
        <taxon>Gammaproteobacteria</taxon>
        <taxon>Enterobacterales</taxon>
        <taxon>Enterobacteriaceae</taxon>
        <taxon>Salmonella</taxon>
    </lineage>
</organism>
<sequence length="156" mass="16008">MNIIKANVAAPDARVAITIARFNQFINDSLLDGAVDALTRIGQVKDDNITVVWVPGAYELPLATEALAKSGKYDAVVALGTVIRGGTAHFEYVAGGASNGLASVAQDSGVPVAFGVLTTESIEQAIERAGTKAGNKGAEAALTALEMINVLKAIKA</sequence>
<protein>
    <recommendedName>
        <fullName>6,7-dimethyl-8-ribityllumazine synthase</fullName>
        <shortName>DMRL synthase</shortName>
        <shortName>LS</shortName>
        <shortName>Lumazine synthase</shortName>
        <ecNumber>2.5.1.78</ecNumber>
    </recommendedName>
</protein>
<gene>
    <name type="primary">ribH</name>
    <name type="ordered locus">STM0417</name>
</gene>
<accession>P66038</accession>
<accession>Q8XFI9</accession>
<comment type="function">
    <text evidence="1">Catalyzes the formation of 6,7-dimethyl-8-ribityllumazine by condensation of 5-amino-6-(D-ribitylamino)uracil with 3,4-dihydroxy-2-butanone 4-phosphate. This is the penultimate step in the biosynthesis of riboflavin (By similarity).</text>
</comment>
<comment type="catalytic activity">
    <reaction>
        <text>(2S)-2-hydroxy-3-oxobutyl phosphate + 5-amino-6-(D-ribitylamino)uracil = 6,7-dimethyl-8-(1-D-ribityl)lumazine + phosphate + 2 H2O + H(+)</text>
        <dbReference type="Rhea" id="RHEA:26152"/>
        <dbReference type="ChEBI" id="CHEBI:15377"/>
        <dbReference type="ChEBI" id="CHEBI:15378"/>
        <dbReference type="ChEBI" id="CHEBI:15934"/>
        <dbReference type="ChEBI" id="CHEBI:43474"/>
        <dbReference type="ChEBI" id="CHEBI:58201"/>
        <dbReference type="ChEBI" id="CHEBI:58830"/>
        <dbReference type="EC" id="2.5.1.78"/>
    </reaction>
</comment>
<comment type="pathway">
    <text evidence="3">Cofactor biosynthesis; riboflavin biosynthesis; riboflavin from 2-hydroxy-3-oxobutyl phosphate and 5-amino-6-(D-ribitylamino)uracil: step 1/2.</text>
</comment>
<comment type="subunit">
    <text evidence="3">Forms an icosahedral capsid composed of 60 subunits, arranged as a dodecamer of pentamers.</text>
</comment>
<comment type="similarity">
    <text evidence="4">Belongs to the DMRL synthase family.</text>
</comment>
<feature type="chain" id="PRO_0000134800" description="6,7-dimethyl-8-ribityllumazine synthase">
    <location>
        <begin position="1"/>
        <end position="156"/>
    </location>
</feature>
<feature type="active site" description="Proton donor" evidence="2">
    <location>
        <position position="89"/>
    </location>
</feature>
<feature type="binding site" evidence="1">
    <location>
        <position position="22"/>
    </location>
    <ligand>
        <name>5-amino-6-(D-ribitylamino)uracil</name>
        <dbReference type="ChEBI" id="CHEBI:15934"/>
    </ligand>
</feature>
<feature type="binding site" evidence="1">
    <location>
        <begin position="57"/>
        <end position="59"/>
    </location>
    <ligand>
        <name>5-amino-6-(D-ribitylamino)uracil</name>
        <dbReference type="ChEBI" id="CHEBI:15934"/>
    </ligand>
</feature>
<feature type="binding site" evidence="1">
    <location>
        <begin position="81"/>
        <end position="83"/>
    </location>
    <ligand>
        <name>5-amino-6-(D-ribitylamino)uracil</name>
        <dbReference type="ChEBI" id="CHEBI:15934"/>
    </ligand>
</feature>
<feature type="binding site" evidence="4">
    <location>
        <begin position="86"/>
        <end position="87"/>
    </location>
    <ligand>
        <name>(2S)-2-hydroxy-3-oxobutyl phosphate</name>
        <dbReference type="ChEBI" id="CHEBI:58830"/>
    </ligand>
</feature>
<feature type="binding site" evidence="1">
    <location>
        <position position="114"/>
    </location>
    <ligand>
        <name>5-amino-6-(D-ribitylamino)uracil</name>
        <dbReference type="ChEBI" id="CHEBI:15934"/>
    </ligand>
</feature>
<feature type="binding site" evidence="4">
    <location>
        <position position="128"/>
    </location>
    <ligand>
        <name>(2S)-2-hydroxy-3-oxobutyl phosphate</name>
        <dbReference type="ChEBI" id="CHEBI:58830"/>
    </ligand>
</feature>
<feature type="strand" evidence="5">
    <location>
        <begin position="2"/>
        <end position="5"/>
    </location>
</feature>
<feature type="strand" evidence="5">
    <location>
        <begin position="15"/>
        <end position="21"/>
    </location>
</feature>
<feature type="helix" evidence="5">
    <location>
        <begin position="24"/>
        <end position="40"/>
    </location>
</feature>
<feature type="strand" evidence="5">
    <location>
        <begin position="48"/>
        <end position="56"/>
    </location>
</feature>
<feature type="turn" evidence="5">
    <location>
        <begin position="57"/>
        <end position="59"/>
    </location>
</feature>
<feature type="helix" evidence="5">
    <location>
        <begin position="60"/>
        <end position="70"/>
    </location>
</feature>
<feature type="strand" evidence="5">
    <location>
        <begin position="74"/>
        <end position="83"/>
    </location>
</feature>
<feature type="strand" evidence="5">
    <location>
        <begin position="86"/>
        <end position="88"/>
    </location>
</feature>
<feature type="helix" evidence="5">
    <location>
        <begin position="89"/>
        <end position="108"/>
    </location>
</feature>
<feature type="strand" evidence="5">
    <location>
        <begin position="112"/>
        <end position="120"/>
    </location>
</feature>
<feature type="helix" evidence="5">
    <location>
        <begin position="122"/>
        <end position="128"/>
    </location>
</feature>
<feature type="helix" evidence="5">
    <location>
        <begin position="136"/>
        <end position="152"/>
    </location>
</feature>
<evidence type="ECO:0000250" key="1"/>
<evidence type="ECO:0000255" key="2"/>
<evidence type="ECO:0000269" key="3">
    <source>
    </source>
</evidence>
<evidence type="ECO:0000305" key="4"/>
<evidence type="ECO:0007829" key="5">
    <source>
        <dbReference type="PDB" id="3NQ4"/>
    </source>
</evidence>
<name>RISB_SALTY</name>
<keyword id="KW-0002">3D-structure</keyword>
<keyword id="KW-1185">Reference proteome</keyword>
<keyword id="KW-0686">Riboflavin biosynthesis</keyword>
<keyword id="KW-0808">Transferase</keyword>
<proteinExistence type="evidence at protein level"/>
<reference key="1">
    <citation type="journal article" date="2001" name="Nature">
        <title>Complete genome sequence of Salmonella enterica serovar Typhimurium LT2.</title>
        <authorList>
            <person name="McClelland M."/>
            <person name="Sanderson K.E."/>
            <person name="Spieth J."/>
            <person name="Clifton S.W."/>
            <person name="Latreille P."/>
            <person name="Courtney L."/>
            <person name="Porwollik S."/>
            <person name="Ali J."/>
            <person name="Dante M."/>
            <person name="Du F."/>
            <person name="Hou S."/>
            <person name="Layman D."/>
            <person name="Leonard S."/>
            <person name="Nguyen C."/>
            <person name="Scott K."/>
            <person name="Holmes A."/>
            <person name="Grewal N."/>
            <person name="Mulvaney E."/>
            <person name="Ryan E."/>
            <person name="Sun H."/>
            <person name="Florea L."/>
            <person name="Miller W."/>
            <person name="Stoneking T."/>
            <person name="Nhan M."/>
            <person name="Waterston R."/>
            <person name="Wilson R.K."/>
        </authorList>
    </citation>
    <scope>NUCLEOTIDE SEQUENCE [LARGE SCALE GENOMIC DNA]</scope>
    <source>
        <strain>LT2 / SGSC1412 / ATCC 700720</strain>
    </source>
</reference>
<reference key="2">
    <citation type="journal article" date="2011" name="Acta Crystallogr. D">
        <title>Crystal structure analysis of icosahedral lumazine synthase from Salmonella typhimurium, an antibacterial drug target.</title>
        <authorList>
            <person name="Kumar P."/>
            <person name="Singh M."/>
            <person name="Karthikeyan S."/>
        </authorList>
    </citation>
    <scope>X-RAY CRYSTALLOGRAPHY (3.50 ANGSTROMS) IN COMPLEX WITH SULFATE</scope>
    <scope>SUBUNIT</scope>
    <scope>PATHWAY</scope>
</reference>
<dbReference type="EC" id="2.5.1.78"/>
<dbReference type="EMBL" id="AE006468">
    <property type="protein sequence ID" value="AAL19371.1"/>
    <property type="molecule type" value="Genomic_DNA"/>
</dbReference>
<dbReference type="RefSeq" id="NP_459412.1">
    <property type="nucleotide sequence ID" value="NC_003197.2"/>
</dbReference>
<dbReference type="PDB" id="3MK3">
    <property type="method" value="X-ray"/>
    <property type="resolution" value="3.57 A"/>
    <property type="chains" value="1/2/3/4/5/6/7/8/9/A/B/C/D/E/F/G/H/I/J/K/L/M/N/O/P/Q/R/S/T/U/V/W/X/Y/Z/a/b/c/d/e/f/g/h/i/j/k/l/m/n/o/p/q/r/s/t/u/v/w/x/y=1-156"/>
</dbReference>
<dbReference type="PDB" id="3NQ4">
    <property type="method" value="X-ray"/>
    <property type="resolution" value="3.50 A"/>
    <property type="chains" value="1/2/3/4/A/B/C/D/E/F/G/H/I/J/K/L/M/N/O/P/Q/R/S/T/U/V/W/X/Y/Z=1-156"/>
</dbReference>
<dbReference type="PDBsum" id="3MK3"/>
<dbReference type="PDBsum" id="3NQ4"/>
<dbReference type="SMR" id="P66038"/>
<dbReference type="STRING" id="99287.STM0417"/>
<dbReference type="PaxDb" id="99287-STM0417"/>
<dbReference type="GeneID" id="1251936"/>
<dbReference type="KEGG" id="stm:STM0417"/>
<dbReference type="PATRIC" id="fig|99287.12.peg.446"/>
<dbReference type="HOGENOM" id="CLU_089358_1_1_6"/>
<dbReference type="OMA" id="CQGVTQG"/>
<dbReference type="PhylomeDB" id="P66038"/>
<dbReference type="BioCyc" id="SENT99287:STM0417-MONOMER"/>
<dbReference type="BRENDA" id="2.5.1.78">
    <property type="organism ID" value="5542"/>
</dbReference>
<dbReference type="UniPathway" id="UPA00275">
    <property type="reaction ID" value="UER00404"/>
</dbReference>
<dbReference type="Proteomes" id="UP000001014">
    <property type="component" value="Chromosome"/>
</dbReference>
<dbReference type="GO" id="GO:0005737">
    <property type="term" value="C:cytoplasm"/>
    <property type="evidence" value="ECO:0000318"/>
    <property type="project" value="GO_Central"/>
</dbReference>
<dbReference type="GO" id="GO:0005829">
    <property type="term" value="C:cytosol"/>
    <property type="evidence" value="ECO:0000318"/>
    <property type="project" value="GO_Central"/>
</dbReference>
<dbReference type="GO" id="GO:0009349">
    <property type="term" value="C:riboflavin synthase complex"/>
    <property type="evidence" value="ECO:0007669"/>
    <property type="project" value="InterPro"/>
</dbReference>
<dbReference type="GO" id="GO:0000906">
    <property type="term" value="F:6,7-dimethyl-8-ribityllumazine synthase activity"/>
    <property type="evidence" value="ECO:0000318"/>
    <property type="project" value="GO_Central"/>
</dbReference>
<dbReference type="GO" id="GO:0009231">
    <property type="term" value="P:riboflavin biosynthetic process"/>
    <property type="evidence" value="ECO:0000318"/>
    <property type="project" value="GO_Central"/>
</dbReference>
<dbReference type="CDD" id="cd09209">
    <property type="entry name" value="Lumazine_synthase-I"/>
    <property type="match status" value="1"/>
</dbReference>
<dbReference type="FunFam" id="3.40.50.960:FF:000001">
    <property type="entry name" value="6,7-dimethyl-8-ribityllumazine synthase"/>
    <property type="match status" value="1"/>
</dbReference>
<dbReference type="Gene3D" id="3.40.50.960">
    <property type="entry name" value="Lumazine/riboflavin synthase"/>
    <property type="match status" value="1"/>
</dbReference>
<dbReference type="HAMAP" id="MF_00178">
    <property type="entry name" value="Lumazine_synth"/>
    <property type="match status" value="1"/>
</dbReference>
<dbReference type="InterPro" id="IPR034964">
    <property type="entry name" value="LS"/>
</dbReference>
<dbReference type="InterPro" id="IPR002180">
    <property type="entry name" value="LS/RS"/>
</dbReference>
<dbReference type="InterPro" id="IPR036467">
    <property type="entry name" value="LS/RS_sf"/>
</dbReference>
<dbReference type="NCBIfam" id="TIGR00114">
    <property type="entry name" value="lumazine-synth"/>
    <property type="match status" value="1"/>
</dbReference>
<dbReference type="NCBIfam" id="NF000812">
    <property type="entry name" value="PRK00061.1-4"/>
    <property type="match status" value="1"/>
</dbReference>
<dbReference type="PANTHER" id="PTHR21058:SF0">
    <property type="entry name" value="6,7-DIMETHYL-8-RIBITYLLUMAZINE SYNTHASE"/>
    <property type="match status" value="1"/>
</dbReference>
<dbReference type="PANTHER" id="PTHR21058">
    <property type="entry name" value="6,7-DIMETHYL-8-RIBITYLLUMAZINE SYNTHASE DMRL SYNTHASE LUMAZINE SYNTHASE"/>
    <property type="match status" value="1"/>
</dbReference>
<dbReference type="Pfam" id="PF00885">
    <property type="entry name" value="DMRL_synthase"/>
    <property type="match status" value="1"/>
</dbReference>
<dbReference type="SUPFAM" id="SSF52121">
    <property type="entry name" value="Lumazine synthase"/>
    <property type="match status" value="1"/>
</dbReference>